<name>ABCG8_DICDI</name>
<feature type="chain" id="PRO_0000391395" description="ABC transporter G family member 8">
    <location>
        <begin position="1"/>
        <end position="626"/>
    </location>
</feature>
<feature type="transmembrane region" description="Helical" evidence="1">
    <location>
        <begin position="376"/>
        <end position="396"/>
    </location>
</feature>
<feature type="transmembrane region" description="Helical" evidence="1">
    <location>
        <begin position="409"/>
        <end position="429"/>
    </location>
</feature>
<feature type="transmembrane region" description="Helical" evidence="1">
    <location>
        <begin position="447"/>
        <end position="467"/>
    </location>
</feature>
<feature type="transmembrane region" description="Helical" evidence="1">
    <location>
        <begin position="485"/>
        <end position="505"/>
    </location>
</feature>
<feature type="transmembrane region" description="Helical" evidence="1">
    <location>
        <begin position="515"/>
        <end position="535"/>
    </location>
</feature>
<feature type="transmembrane region" description="Helical" evidence="1">
    <location>
        <begin position="543"/>
        <end position="563"/>
    </location>
</feature>
<feature type="transmembrane region" description="Helical" evidence="1">
    <location>
        <begin position="600"/>
        <end position="620"/>
    </location>
</feature>
<feature type="domain" description="ABC transporter" evidence="2">
    <location>
        <begin position="56"/>
        <end position="300"/>
    </location>
</feature>
<feature type="domain" description="ABC transmembrane type-2">
    <location>
        <begin position="373"/>
        <end position="621"/>
    </location>
</feature>
<feature type="binding site" evidence="2">
    <location>
        <begin position="90"/>
        <end position="97"/>
    </location>
    <ligand>
        <name>ATP</name>
        <dbReference type="ChEBI" id="CHEBI:30616"/>
    </ligand>
</feature>
<feature type="sequence conflict" description="In Ref. 1; AAL91493." evidence="3" ref="1">
    <original>T</original>
    <variation>P</variation>
    <location>
        <position position="5"/>
    </location>
</feature>
<feature type="sequence conflict" description="In Ref. 1; AAL91493." evidence="3" ref="1">
    <original>H</original>
    <variation>P</variation>
    <location>
        <position position="622"/>
    </location>
</feature>
<protein>
    <recommendedName>
        <fullName>ABC transporter G family member 8</fullName>
    </recommendedName>
    <alternativeName>
        <fullName>ABC transporter ABCG.8</fullName>
    </alternativeName>
</protein>
<reference key="1">
    <citation type="journal article" date="2002" name="Eukaryot. Cell">
        <title>Evolutionary analyses of ABC transporters of Dictyostelium discoideum.</title>
        <authorList>
            <person name="Anjard C."/>
            <person name="Loomis W.F."/>
        </authorList>
    </citation>
    <scope>NUCLEOTIDE SEQUENCE [GENOMIC DNA]</scope>
    <scope>NOMENCLATURE</scope>
    <source>
        <strain>AX4</strain>
    </source>
</reference>
<reference key="2">
    <citation type="journal article" date="2002" name="Nature">
        <title>Sequence and analysis of chromosome 2 of Dictyostelium discoideum.</title>
        <authorList>
            <person name="Gloeckner G."/>
            <person name="Eichinger L."/>
            <person name="Szafranski K."/>
            <person name="Pachebat J.A."/>
            <person name="Bankier A.T."/>
            <person name="Dear P.H."/>
            <person name="Lehmann R."/>
            <person name="Baumgart C."/>
            <person name="Parra G."/>
            <person name="Abril J.F."/>
            <person name="Guigo R."/>
            <person name="Kumpf K."/>
            <person name="Tunggal B."/>
            <person name="Cox E.C."/>
            <person name="Quail M.A."/>
            <person name="Platzer M."/>
            <person name="Rosenthal A."/>
            <person name="Noegel A.A."/>
        </authorList>
    </citation>
    <scope>NUCLEOTIDE SEQUENCE [LARGE SCALE GENOMIC DNA]</scope>
    <source>
        <strain>AX4</strain>
    </source>
</reference>
<reference key="3">
    <citation type="journal article" date="2005" name="Nature">
        <title>The genome of the social amoeba Dictyostelium discoideum.</title>
        <authorList>
            <person name="Eichinger L."/>
            <person name="Pachebat J.A."/>
            <person name="Gloeckner G."/>
            <person name="Rajandream M.A."/>
            <person name="Sucgang R."/>
            <person name="Berriman M."/>
            <person name="Song J."/>
            <person name="Olsen R."/>
            <person name="Szafranski K."/>
            <person name="Xu Q."/>
            <person name="Tunggal B."/>
            <person name="Kummerfeld S."/>
            <person name="Madera M."/>
            <person name="Konfortov B.A."/>
            <person name="Rivero F."/>
            <person name="Bankier A.T."/>
            <person name="Lehmann R."/>
            <person name="Hamlin N."/>
            <person name="Davies R."/>
            <person name="Gaudet P."/>
            <person name="Fey P."/>
            <person name="Pilcher K."/>
            <person name="Chen G."/>
            <person name="Saunders D."/>
            <person name="Sodergren E.J."/>
            <person name="Davis P."/>
            <person name="Kerhornou A."/>
            <person name="Nie X."/>
            <person name="Hall N."/>
            <person name="Anjard C."/>
            <person name="Hemphill L."/>
            <person name="Bason N."/>
            <person name="Farbrother P."/>
            <person name="Desany B."/>
            <person name="Just E."/>
            <person name="Morio T."/>
            <person name="Rost R."/>
            <person name="Churcher C.M."/>
            <person name="Cooper J."/>
            <person name="Haydock S."/>
            <person name="van Driessche N."/>
            <person name="Cronin A."/>
            <person name="Goodhead I."/>
            <person name="Muzny D.M."/>
            <person name="Mourier T."/>
            <person name="Pain A."/>
            <person name="Lu M."/>
            <person name="Harper D."/>
            <person name="Lindsay R."/>
            <person name="Hauser H."/>
            <person name="James K.D."/>
            <person name="Quiles M."/>
            <person name="Madan Babu M."/>
            <person name="Saito T."/>
            <person name="Buchrieser C."/>
            <person name="Wardroper A."/>
            <person name="Felder M."/>
            <person name="Thangavelu M."/>
            <person name="Johnson D."/>
            <person name="Knights A."/>
            <person name="Loulseged H."/>
            <person name="Mungall K.L."/>
            <person name="Oliver K."/>
            <person name="Price C."/>
            <person name="Quail M.A."/>
            <person name="Urushihara H."/>
            <person name="Hernandez J."/>
            <person name="Rabbinowitsch E."/>
            <person name="Steffen D."/>
            <person name="Sanders M."/>
            <person name="Ma J."/>
            <person name="Kohara Y."/>
            <person name="Sharp S."/>
            <person name="Simmonds M.N."/>
            <person name="Spiegler S."/>
            <person name="Tivey A."/>
            <person name="Sugano S."/>
            <person name="White B."/>
            <person name="Walker D."/>
            <person name="Woodward J.R."/>
            <person name="Winckler T."/>
            <person name="Tanaka Y."/>
            <person name="Shaulsky G."/>
            <person name="Schleicher M."/>
            <person name="Weinstock G.M."/>
            <person name="Rosenthal A."/>
            <person name="Cox E.C."/>
            <person name="Chisholm R.L."/>
            <person name="Gibbs R.A."/>
            <person name="Loomis W.F."/>
            <person name="Platzer M."/>
            <person name="Kay R.R."/>
            <person name="Williams J.G."/>
            <person name="Dear P.H."/>
            <person name="Noegel A.A."/>
            <person name="Barrell B.G."/>
            <person name="Kuspa A."/>
        </authorList>
    </citation>
    <scope>NUCLEOTIDE SEQUENCE [LARGE SCALE GENOMIC DNA]</scope>
    <source>
        <strain>AX4</strain>
    </source>
</reference>
<accession>Q86HQ2</accession>
<accession>Q555D5</accession>
<accession>Q8T684</accession>
<organism>
    <name type="scientific">Dictyostelium discoideum</name>
    <name type="common">Social amoeba</name>
    <dbReference type="NCBI Taxonomy" id="44689"/>
    <lineage>
        <taxon>Eukaryota</taxon>
        <taxon>Amoebozoa</taxon>
        <taxon>Evosea</taxon>
        <taxon>Eumycetozoa</taxon>
        <taxon>Dictyostelia</taxon>
        <taxon>Dictyosteliales</taxon>
        <taxon>Dictyosteliaceae</taxon>
        <taxon>Dictyostelium</taxon>
    </lineage>
</organism>
<gene>
    <name type="primary">abcG8</name>
    <name type="ORF">DDB_G0274117</name>
</gene>
<proteinExistence type="inferred from homology"/>
<dbReference type="EMBL" id="AF482387">
    <property type="protein sequence ID" value="AAL91493.1"/>
    <property type="molecule type" value="Genomic_DNA"/>
</dbReference>
<dbReference type="EMBL" id="AAFI02000012">
    <property type="protein sequence ID" value="EAL69951.1"/>
    <property type="molecule type" value="Genomic_DNA"/>
</dbReference>
<dbReference type="RefSeq" id="XP_644138.1">
    <property type="nucleotide sequence ID" value="XM_639046.1"/>
</dbReference>
<dbReference type="SMR" id="Q86HQ2"/>
<dbReference type="FunCoup" id="Q86HQ2">
    <property type="interactions" value="31"/>
</dbReference>
<dbReference type="STRING" id="44689.Q86HQ2"/>
<dbReference type="PaxDb" id="44689-DDB0191232"/>
<dbReference type="EnsemblProtists" id="EAL69951">
    <property type="protein sequence ID" value="EAL69951"/>
    <property type="gene ID" value="DDB_G0274117"/>
</dbReference>
<dbReference type="GeneID" id="8619568"/>
<dbReference type="KEGG" id="ddi:DDB_G0274117"/>
<dbReference type="dictyBase" id="DDB_G0274117">
    <property type="gene designation" value="abcG8"/>
</dbReference>
<dbReference type="VEuPathDB" id="AmoebaDB:DDB_G0274117"/>
<dbReference type="eggNOG" id="KOG0061">
    <property type="taxonomic scope" value="Eukaryota"/>
</dbReference>
<dbReference type="HOGENOM" id="CLU_000604_57_8_1"/>
<dbReference type="InParanoid" id="Q86HQ2"/>
<dbReference type="OMA" id="TENTYAP"/>
<dbReference type="PhylomeDB" id="Q86HQ2"/>
<dbReference type="Reactome" id="R-DDI-1369062">
    <property type="pathway name" value="ABC transporters in lipid homeostasis"/>
</dbReference>
<dbReference type="Reactome" id="R-DDI-1660661">
    <property type="pathway name" value="Sphingolipid de novo biosynthesis"/>
</dbReference>
<dbReference type="Reactome" id="R-DDI-189451">
    <property type="pathway name" value="Heme biosynthesis"/>
</dbReference>
<dbReference type="Reactome" id="R-DDI-189483">
    <property type="pathway name" value="Heme degradation"/>
</dbReference>
<dbReference type="Reactome" id="R-DDI-917937">
    <property type="pathway name" value="Iron uptake and transport"/>
</dbReference>
<dbReference type="Reactome" id="R-DDI-9753281">
    <property type="pathway name" value="Paracetamol ADME"/>
</dbReference>
<dbReference type="Reactome" id="R-DDI-9793528">
    <property type="pathway name" value="Ciprofloxacin ADME"/>
</dbReference>
<dbReference type="PRO" id="PR:Q86HQ2"/>
<dbReference type="Proteomes" id="UP000002195">
    <property type="component" value="Chromosome 2"/>
</dbReference>
<dbReference type="GO" id="GO:0016020">
    <property type="term" value="C:membrane"/>
    <property type="evidence" value="ECO:0000318"/>
    <property type="project" value="GO_Central"/>
</dbReference>
<dbReference type="GO" id="GO:0140359">
    <property type="term" value="F:ABC-type transporter activity"/>
    <property type="evidence" value="ECO:0007669"/>
    <property type="project" value="InterPro"/>
</dbReference>
<dbReference type="GO" id="GO:0005524">
    <property type="term" value="F:ATP binding"/>
    <property type="evidence" value="ECO:0007669"/>
    <property type="project" value="UniProtKB-KW"/>
</dbReference>
<dbReference type="GO" id="GO:0016887">
    <property type="term" value="F:ATP hydrolysis activity"/>
    <property type="evidence" value="ECO:0007669"/>
    <property type="project" value="InterPro"/>
</dbReference>
<dbReference type="GO" id="GO:0042626">
    <property type="term" value="F:ATPase-coupled transmembrane transporter activity"/>
    <property type="evidence" value="ECO:0000318"/>
    <property type="project" value="GO_Central"/>
</dbReference>
<dbReference type="GO" id="GO:0030587">
    <property type="term" value="P:sorocarp development"/>
    <property type="evidence" value="ECO:0007669"/>
    <property type="project" value="UniProtKB-ARBA"/>
</dbReference>
<dbReference type="GO" id="GO:0055085">
    <property type="term" value="P:transmembrane transport"/>
    <property type="evidence" value="ECO:0000318"/>
    <property type="project" value="GO_Central"/>
</dbReference>
<dbReference type="CDD" id="cd03213">
    <property type="entry name" value="ABCG_EPDR"/>
    <property type="match status" value="1"/>
</dbReference>
<dbReference type="FunFam" id="3.40.50.300:FF:002300">
    <property type="entry name" value="ABC transporter G family protein"/>
    <property type="match status" value="1"/>
</dbReference>
<dbReference type="Gene3D" id="3.40.50.300">
    <property type="entry name" value="P-loop containing nucleotide triphosphate hydrolases"/>
    <property type="match status" value="1"/>
</dbReference>
<dbReference type="InterPro" id="IPR003593">
    <property type="entry name" value="AAA+_ATPase"/>
</dbReference>
<dbReference type="InterPro" id="IPR013525">
    <property type="entry name" value="ABC2_TM"/>
</dbReference>
<dbReference type="InterPro" id="IPR003439">
    <property type="entry name" value="ABC_transporter-like_ATP-bd"/>
</dbReference>
<dbReference type="InterPro" id="IPR017871">
    <property type="entry name" value="ABC_transporter-like_CS"/>
</dbReference>
<dbReference type="InterPro" id="IPR050352">
    <property type="entry name" value="ABCG_transporters"/>
</dbReference>
<dbReference type="InterPro" id="IPR027417">
    <property type="entry name" value="P-loop_NTPase"/>
</dbReference>
<dbReference type="PANTHER" id="PTHR48041:SF87">
    <property type="entry name" value="ABC TRANSPORTER G FAMILY MEMBER 12-RELATED"/>
    <property type="match status" value="1"/>
</dbReference>
<dbReference type="PANTHER" id="PTHR48041">
    <property type="entry name" value="ABC TRANSPORTER G FAMILY MEMBER 28"/>
    <property type="match status" value="1"/>
</dbReference>
<dbReference type="Pfam" id="PF01061">
    <property type="entry name" value="ABC2_membrane"/>
    <property type="match status" value="1"/>
</dbReference>
<dbReference type="Pfam" id="PF00005">
    <property type="entry name" value="ABC_tran"/>
    <property type="match status" value="1"/>
</dbReference>
<dbReference type="SMART" id="SM00382">
    <property type="entry name" value="AAA"/>
    <property type="match status" value="1"/>
</dbReference>
<dbReference type="SUPFAM" id="SSF52540">
    <property type="entry name" value="P-loop containing nucleoside triphosphate hydrolases"/>
    <property type="match status" value="1"/>
</dbReference>
<dbReference type="PROSITE" id="PS00211">
    <property type="entry name" value="ABC_TRANSPORTER_1"/>
    <property type="match status" value="1"/>
</dbReference>
<dbReference type="PROSITE" id="PS50893">
    <property type="entry name" value="ABC_TRANSPORTER_2"/>
    <property type="match status" value="1"/>
</dbReference>
<sequence length="626" mass="70566">MELETIEYNKSFNICENGDSKGVQLTFKNISYKVENKNYNKNKKEKNKNKIDPEFVNLDNKTENSNEKEITILYNVGGVIEKGELVALMGPSGSGKSTLLDILAQRKSTGKITGQLLVNGKEIGEAYKKYCSYVTQEDVLLQTYTVFETLKFYADLKLPGVSEIEKIKRVEKVIEDVGLTLKRDSRVGGVLAGGVAVTGLSGGEKRRVSIGCGLITNPSLIFLDEPTSGLDSVAALQIMKTLLNLTLKGVTVICSIHQPRPEIFQLINKVMVIIKGKMIYSGSNILEYFESLGYPCPNNTNPADFCLDSAVEIGEGERYTEICNQWENKWENQLTNEIEYPSLNVDIPKTTSWVYQYWILLNREWRGFIRNKGNALSRVITAIVIGALFGSCFAGLKESDADVQKIMGTLFFLTTGLMLSPFSMITLFLSGRQLFNSERASKIYHSFPYFLSMITVELTIEFFVTLVEVTVCYMLARLRMDAGRFFFAVLVYSFIHSLSTFFISSLANLTGTSDLTFSYASSLSVVFMLFAGFYVPTNELPRAFGWLHWVNPAFYGYSSVVINQFEDLQLKCTDEPCKFTNGNQVIEYYGIEDWTRGGSFGVLVAWATFFYSLSYFALHFLHREKR</sequence>
<comment type="subcellular location">
    <subcellularLocation>
        <location evidence="3">Membrane</location>
        <topology evidence="3">Multi-pass membrane protein</topology>
    </subcellularLocation>
</comment>
<comment type="similarity">
    <text evidence="3">Belongs to the ABC transporter superfamily. ABCG family. Eye pigment precursor importer (TC 3.A.1.204) subfamily.</text>
</comment>
<keyword id="KW-0067">ATP-binding</keyword>
<keyword id="KW-0472">Membrane</keyword>
<keyword id="KW-0547">Nucleotide-binding</keyword>
<keyword id="KW-1185">Reference proteome</keyword>
<keyword id="KW-0812">Transmembrane</keyword>
<keyword id="KW-1133">Transmembrane helix</keyword>
<keyword id="KW-0813">Transport</keyword>
<evidence type="ECO:0000255" key="1"/>
<evidence type="ECO:0000255" key="2">
    <source>
        <dbReference type="PROSITE-ProRule" id="PRU00434"/>
    </source>
</evidence>
<evidence type="ECO:0000305" key="3"/>